<protein>
    <recommendedName>
        <fullName evidence="1">Photosystem I reaction center subunit IX</fullName>
    </recommendedName>
    <alternativeName>
        <fullName evidence="1">PSI-J</fullName>
    </alternativeName>
</protein>
<accession>Q2L930</accession>
<organism>
    <name type="scientific">Gossypium hirsutum</name>
    <name type="common">Upland cotton</name>
    <name type="synonym">Gossypium mexicanum</name>
    <dbReference type="NCBI Taxonomy" id="3635"/>
    <lineage>
        <taxon>Eukaryota</taxon>
        <taxon>Viridiplantae</taxon>
        <taxon>Streptophyta</taxon>
        <taxon>Embryophyta</taxon>
        <taxon>Tracheophyta</taxon>
        <taxon>Spermatophyta</taxon>
        <taxon>Magnoliopsida</taxon>
        <taxon>eudicotyledons</taxon>
        <taxon>Gunneridae</taxon>
        <taxon>Pentapetalae</taxon>
        <taxon>rosids</taxon>
        <taxon>malvids</taxon>
        <taxon>Malvales</taxon>
        <taxon>Malvaceae</taxon>
        <taxon>Malvoideae</taxon>
        <taxon>Gossypium</taxon>
    </lineage>
</organism>
<comment type="function">
    <text evidence="1">May help in the organization of the PsaE and PsaF subunits.</text>
</comment>
<comment type="subcellular location">
    <subcellularLocation>
        <location evidence="1">Plastid</location>
        <location evidence="1">Chloroplast thylakoid membrane</location>
        <topology evidence="1">Single-pass membrane protein</topology>
    </subcellularLocation>
</comment>
<comment type="similarity">
    <text evidence="1">Belongs to the PsaJ family.</text>
</comment>
<geneLocation type="chloroplast"/>
<gene>
    <name evidence="1" type="primary">psaJ</name>
</gene>
<reference key="1">
    <citation type="journal article" date="2006" name="BMC Genomics">
        <title>The complete chloroplast genome sequence of Gossypium hirsutum: organization and phylogenetic relationships to other angiosperms.</title>
        <authorList>
            <person name="Lee S.-B."/>
            <person name="Kaittanis C."/>
            <person name="Jansen R.K."/>
            <person name="Hostetler J.B."/>
            <person name="Tallon L.J."/>
            <person name="Town C.D."/>
            <person name="Daniell H."/>
        </authorList>
    </citation>
    <scope>NUCLEOTIDE SEQUENCE [LARGE SCALE GENOMIC DNA]</scope>
    <source>
        <strain>cv. Coker 310FR</strain>
    </source>
</reference>
<sequence>MRDLKTYLSVAPVLSTLWFGSLAGLLIEINRFFPDALTFPFF</sequence>
<keyword id="KW-0150">Chloroplast</keyword>
<keyword id="KW-0472">Membrane</keyword>
<keyword id="KW-0602">Photosynthesis</keyword>
<keyword id="KW-0603">Photosystem I</keyword>
<keyword id="KW-0934">Plastid</keyword>
<keyword id="KW-1185">Reference proteome</keyword>
<keyword id="KW-0793">Thylakoid</keyword>
<keyword id="KW-0812">Transmembrane</keyword>
<keyword id="KW-1133">Transmembrane helix</keyword>
<proteinExistence type="inferred from homology"/>
<name>PSAJ_GOSHI</name>
<evidence type="ECO:0000255" key="1">
    <source>
        <dbReference type="HAMAP-Rule" id="MF_00522"/>
    </source>
</evidence>
<dbReference type="EMBL" id="DQ345959">
    <property type="protein sequence ID" value="ABC73648.1"/>
    <property type="molecule type" value="Genomic_DNA"/>
</dbReference>
<dbReference type="RefSeq" id="YP_538955.1">
    <property type="nucleotide sequence ID" value="NC_007944.1"/>
</dbReference>
<dbReference type="SMR" id="Q2L930"/>
<dbReference type="GeneID" id="3989125"/>
<dbReference type="KEGG" id="ghi:3989125"/>
<dbReference type="OrthoDB" id="5869at41938"/>
<dbReference type="Proteomes" id="UP000189702">
    <property type="component" value="Chloroplast Pltd"/>
</dbReference>
<dbReference type="GO" id="GO:0009535">
    <property type="term" value="C:chloroplast thylakoid membrane"/>
    <property type="evidence" value="ECO:0007669"/>
    <property type="project" value="UniProtKB-SubCell"/>
</dbReference>
<dbReference type="GO" id="GO:0009522">
    <property type="term" value="C:photosystem I"/>
    <property type="evidence" value="ECO:0007669"/>
    <property type="project" value="UniProtKB-KW"/>
</dbReference>
<dbReference type="GO" id="GO:0015979">
    <property type="term" value="P:photosynthesis"/>
    <property type="evidence" value="ECO:0007669"/>
    <property type="project" value="UniProtKB-UniRule"/>
</dbReference>
<dbReference type="FunFam" id="1.20.5.510:FF:000001">
    <property type="entry name" value="Photosystem I reaction center subunit IX"/>
    <property type="match status" value="1"/>
</dbReference>
<dbReference type="Gene3D" id="1.20.5.510">
    <property type="entry name" value="Single helix bin"/>
    <property type="match status" value="1"/>
</dbReference>
<dbReference type="HAMAP" id="MF_00522">
    <property type="entry name" value="PSI_PsaJ"/>
    <property type="match status" value="1"/>
</dbReference>
<dbReference type="InterPro" id="IPR002615">
    <property type="entry name" value="PSI_PsaJ"/>
</dbReference>
<dbReference type="InterPro" id="IPR036062">
    <property type="entry name" value="PSI_PsaJ_sf"/>
</dbReference>
<dbReference type="PANTHER" id="PTHR36082">
    <property type="match status" value="1"/>
</dbReference>
<dbReference type="PANTHER" id="PTHR36082:SF2">
    <property type="entry name" value="PHOTOSYSTEM I REACTION CENTER SUBUNIT IX"/>
    <property type="match status" value="1"/>
</dbReference>
<dbReference type="Pfam" id="PF01701">
    <property type="entry name" value="PSI_PsaJ"/>
    <property type="match status" value="1"/>
</dbReference>
<dbReference type="SUPFAM" id="SSF81544">
    <property type="entry name" value="Subunit IX of photosystem I reaction centre, PsaJ"/>
    <property type="match status" value="1"/>
</dbReference>
<feature type="chain" id="PRO_0000276059" description="Photosystem I reaction center subunit IX">
    <location>
        <begin position="1"/>
        <end position="42"/>
    </location>
</feature>
<feature type="transmembrane region" description="Helical" evidence="1">
    <location>
        <begin position="7"/>
        <end position="27"/>
    </location>
</feature>